<protein>
    <recommendedName>
        <fullName>Lysostaphin resistance protein A</fullName>
    </recommendedName>
    <alternativeName>
        <fullName evidence="1">Surface protein display C</fullName>
    </alternativeName>
</protein>
<name>LYRA_STAAN</name>
<gene>
    <name type="primary">lyrA</name>
    <name evidence="1" type="synonym">spdC</name>
    <name type="ordered locus">SA2126</name>
</gene>
<evidence type="ECO:0000250" key="1">
    <source>
        <dbReference type="UniProtKB" id="A0A0H3KA40"/>
    </source>
</evidence>
<evidence type="ECO:0000250" key="2">
    <source>
        <dbReference type="UniProtKB" id="Q2FVT1"/>
    </source>
</evidence>
<evidence type="ECO:0000255" key="3"/>
<evidence type="ECO:0000256" key="4">
    <source>
        <dbReference type="SAM" id="MobiDB-lite"/>
    </source>
</evidence>
<evidence type="ECO:0000305" key="5"/>
<comment type="function">
    <text evidence="1 2">Involved in bacterial cell envelope homeostasis. Regulates peptidoglycan processing by N-acetylglucosaminidase SagB, perhaps acting as a scaffold protein. Pleiotropic regulator of gene expression, probably acting via interactions with multiple two-component systems (By similarity). Plays a role in the abundant deposition of the immunoglobulin G-binding protein A (spa) at the cross-wall, a subcellular structure that initially arises from cytokinesis (By similarity).</text>
</comment>
<comment type="subunit">
    <text evidence="2">Interacts with N-acetylglucosaminidase SagB; interaction is direct and facilitates peptidoglycan processing. Interacts (via N-terminal region including transmembrane domains) with sensor protein kinase WalK (via N-terminal region including transmembrane domains). Interacts (via N-terminal region including transmembrane domains) with sensor protein kinase SaeS. Interacts with other histidine kinases, perhaps via their transmembrane domains.</text>
</comment>
<comment type="subcellular location">
    <subcellularLocation>
        <location evidence="2">Cell membrane</location>
        <topology evidence="2">Multi-pass membrane protein</topology>
    </subcellularLocation>
    <subcellularLocation>
        <location evidence="1">Secreted</location>
        <location evidence="1">Cell wall</location>
    </subcellularLocation>
    <subcellularLocation>
        <location evidence="2">Cell septum</location>
    </subcellularLocation>
    <text evidence="1">Localization to the cross-wall is enriched in dividing cells.</text>
</comment>
<comment type="domain">
    <text evidence="2">C-terminal region not involved in glucosaminidase activity of the SagB-SpdC/LyrA complex.</text>
</comment>
<comment type="similarity">
    <text evidence="5">Belongs to the LyrA family.</text>
</comment>
<sequence length="419" mass="46785">MKNNKISGFQWAMTIFVFFVITMALSIMLRDFQSIIGVKHFIFEVTDLAPLIAAIICILVFKYKKVQLAGLKFSISLKVIERLLLALILPLIILIIGMYSFNTFADSFILLQSTGLSVPITHILIGHILMAFVVEFGFRSYLQNIVETKMNTFFASIVVGLMYSVFSANTTYGTEFAAYNFLYTFSFSMILGELIRATKGRTIYIATTFHASMTFGLIFLFSEEIGDLFSIKVIAISTAIVAVGYIGLSLIIRGIAYLTTRRNLEELEPNNYLDHVNDDEETNHTEAEKSSSNIKDAEKTGVATASTVGVAKNDTENTVADEPSIHEGTEKTEPQHHIGNQTESNHDEDHDITSESVESAESVKQAPQSDDLTNDSNEDEIEQSLKEPATYKEDRRSSVVIDAEKHIEKTEEQSSDKNK</sequence>
<keyword id="KW-1003">Cell membrane</keyword>
<keyword id="KW-0134">Cell wall</keyword>
<keyword id="KW-0472">Membrane</keyword>
<keyword id="KW-0964">Secreted</keyword>
<keyword id="KW-0812">Transmembrane</keyword>
<keyword id="KW-1133">Transmembrane helix</keyword>
<organism>
    <name type="scientific">Staphylococcus aureus (strain N315)</name>
    <dbReference type="NCBI Taxonomy" id="158879"/>
    <lineage>
        <taxon>Bacteria</taxon>
        <taxon>Bacillati</taxon>
        <taxon>Bacillota</taxon>
        <taxon>Bacilli</taxon>
        <taxon>Bacillales</taxon>
        <taxon>Staphylococcaceae</taxon>
        <taxon>Staphylococcus</taxon>
    </lineage>
</organism>
<dbReference type="EMBL" id="BA000018">
    <property type="protein sequence ID" value="BAB43427.1"/>
    <property type="molecule type" value="Genomic_DNA"/>
</dbReference>
<dbReference type="PIR" id="B90033">
    <property type="entry name" value="B90033"/>
</dbReference>
<dbReference type="RefSeq" id="WP_000794442.1">
    <property type="nucleotide sequence ID" value="NC_002745.2"/>
</dbReference>
<dbReference type="SMR" id="Q7A3Z2"/>
<dbReference type="EnsemblBacteria" id="BAB43427">
    <property type="protein sequence ID" value="BAB43427"/>
    <property type="gene ID" value="BAB43427"/>
</dbReference>
<dbReference type="KEGG" id="sau:SA2126"/>
<dbReference type="HOGENOM" id="CLU_046135_0_0_9"/>
<dbReference type="GO" id="GO:0005886">
    <property type="term" value="C:plasma membrane"/>
    <property type="evidence" value="ECO:0007669"/>
    <property type="project" value="UniProtKB-SubCell"/>
</dbReference>
<dbReference type="GO" id="GO:0004175">
    <property type="term" value="F:endopeptidase activity"/>
    <property type="evidence" value="ECO:0007669"/>
    <property type="project" value="UniProtKB-ARBA"/>
</dbReference>
<dbReference type="GO" id="GO:0080120">
    <property type="term" value="P:CAAX-box protein maturation"/>
    <property type="evidence" value="ECO:0007669"/>
    <property type="project" value="UniProtKB-ARBA"/>
</dbReference>
<dbReference type="InterPro" id="IPR003675">
    <property type="entry name" value="Rce1/LyrA-like_dom"/>
</dbReference>
<dbReference type="Pfam" id="PF02517">
    <property type="entry name" value="Rce1-like"/>
    <property type="match status" value="1"/>
</dbReference>
<proteinExistence type="evidence at protein level"/>
<feature type="chain" id="PRO_0000274826" description="Lysostaphin resistance protein A">
    <location>
        <begin position="1"/>
        <end position="419"/>
    </location>
</feature>
<feature type="transmembrane region" description="Helical" evidence="3">
    <location>
        <begin position="9"/>
        <end position="29"/>
    </location>
</feature>
<feature type="transmembrane region" description="Helical" evidence="3">
    <location>
        <begin position="41"/>
        <end position="61"/>
    </location>
</feature>
<feature type="transmembrane region" description="Helical" evidence="3">
    <location>
        <begin position="84"/>
        <end position="104"/>
    </location>
</feature>
<feature type="transmembrane region" description="Helical" evidence="3">
    <location>
        <begin position="118"/>
        <end position="138"/>
    </location>
</feature>
<feature type="transmembrane region" description="Helical" evidence="3">
    <location>
        <begin position="153"/>
        <end position="173"/>
    </location>
</feature>
<feature type="transmembrane region" description="Helical" evidence="3">
    <location>
        <begin position="175"/>
        <end position="195"/>
    </location>
</feature>
<feature type="transmembrane region" description="Helical" evidence="3">
    <location>
        <begin position="202"/>
        <end position="222"/>
    </location>
</feature>
<feature type="transmembrane region" description="Helical" evidence="3">
    <location>
        <begin position="231"/>
        <end position="251"/>
    </location>
</feature>
<feature type="region of interest" description="Disordered" evidence="4">
    <location>
        <begin position="273"/>
        <end position="419"/>
    </location>
</feature>
<feature type="compositionally biased region" description="Basic and acidic residues" evidence="4">
    <location>
        <begin position="282"/>
        <end position="299"/>
    </location>
</feature>
<feature type="compositionally biased region" description="Basic and acidic residues" evidence="4">
    <location>
        <begin position="323"/>
        <end position="336"/>
    </location>
</feature>
<feature type="compositionally biased region" description="Basic and acidic residues" evidence="4">
    <location>
        <begin position="344"/>
        <end position="353"/>
    </location>
</feature>
<feature type="compositionally biased region" description="Acidic residues" evidence="4">
    <location>
        <begin position="372"/>
        <end position="382"/>
    </location>
</feature>
<feature type="compositionally biased region" description="Basic and acidic residues" evidence="4">
    <location>
        <begin position="383"/>
        <end position="419"/>
    </location>
</feature>
<accession>Q7A3Z2</accession>
<reference key="1">
    <citation type="journal article" date="2001" name="Lancet">
        <title>Whole genome sequencing of meticillin-resistant Staphylococcus aureus.</title>
        <authorList>
            <person name="Kuroda M."/>
            <person name="Ohta T."/>
            <person name="Uchiyama I."/>
            <person name="Baba T."/>
            <person name="Yuzawa H."/>
            <person name="Kobayashi I."/>
            <person name="Cui L."/>
            <person name="Oguchi A."/>
            <person name="Aoki K."/>
            <person name="Nagai Y."/>
            <person name="Lian J.-Q."/>
            <person name="Ito T."/>
            <person name="Kanamori M."/>
            <person name="Matsumaru H."/>
            <person name="Maruyama A."/>
            <person name="Murakami H."/>
            <person name="Hosoyama A."/>
            <person name="Mizutani-Ui Y."/>
            <person name="Takahashi N.K."/>
            <person name="Sawano T."/>
            <person name="Inoue R."/>
            <person name="Kaito C."/>
            <person name="Sekimizu K."/>
            <person name="Hirakawa H."/>
            <person name="Kuhara S."/>
            <person name="Goto S."/>
            <person name="Yabuzaki J."/>
            <person name="Kanehisa M."/>
            <person name="Yamashita A."/>
            <person name="Oshima K."/>
            <person name="Furuya K."/>
            <person name="Yoshino C."/>
            <person name="Shiba T."/>
            <person name="Hattori M."/>
            <person name="Ogasawara N."/>
            <person name="Hayashi H."/>
            <person name="Hiramatsu K."/>
        </authorList>
    </citation>
    <scope>NUCLEOTIDE SEQUENCE [LARGE SCALE GENOMIC DNA]</scope>
    <source>
        <strain>N315</strain>
    </source>
</reference>
<reference key="2">
    <citation type="submission" date="2007-10" db="UniProtKB">
        <title>Shotgun proteomic analysis of total and membrane protein extracts of S. aureus strain N315.</title>
        <authorList>
            <person name="Vaezzadeh A.R."/>
            <person name="Deshusses J."/>
            <person name="Lescuyer P."/>
            <person name="Hochstrasser D.F."/>
        </authorList>
    </citation>
    <scope>IDENTIFICATION BY MASS SPECTROMETRY [LARGE SCALE ANALYSIS]</scope>
    <source>
        <strain>N315</strain>
    </source>
</reference>